<feature type="signal peptide" evidence="8">
    <location>
        <begin position="1"/>
        <end position="19"/>
    </location>
</feature>
<feature type="chain" id="PRO_0000035666" description="Diamine oxidase [copper-containing]">
    <location>
        <begin position="20"/>
        <end position="751"/>
    </location>
</feature>
<feature type="active site" description="Proton acceptor" evidence="5">
    <location>
        <position position="373"/>
    </location>
</feature>
<feature type="active site" description="Schiff-base intermediate with substrate; via topaquinone" evidence="5 20 21 22 23">
    <location>
        <position position="461"/>
    </location>
</feature>
<feature type="binding site" evidence="5 20 21 22 23 24">
    <location>
        <position position="510"/>
    </location>
    <ligand>
        <name>Cu(2+)</name>
        <dbReference type="ChEBI" id="CHEBI:29036"/>
    </ligand>
</feature>
<feature type="binding site" evidence="5 20 21 22 23 24">
    <location>
        <position position="512"/>
    </location>
    <ligand>
        <name>Cu(2+)</name>
        <dbReference type="ChEBI" id="CHEBI:29036"/>
    </ligand>
</feature>
<feature type="binding site" evidence="5 20 21 22 23 24">
    <location>
        <position position="519"/>
    </location>
    <ligand>
        <name>Ca(2+)</name>
        <dbReference type="ChEBI" id="CHEBI:29108"/>
        <label>1</label>
    </ligand>
</feature>
<feature type="binding site" evidence="5 20 21 22 23 24">
    <location>
        <position position="520"/>
    </location>
    <ligand>
        <name>Ca(2+)</name>
        <dbReference type="ChEBI" id="CHEBI:29108"/>
        <label>1</label>
    </ligand>
</feature>
<feature type="binding site" evidence="5 20 21 22 23 24">
    <location>
        <position position="521"/>
    </location>
    <ligand>
        <name>Ca(2+)</name>
        <dbReference type="ChEBI" id="CHEBI:29108"/>
        <label>1</label>
    </ligand>
</feature>
<feature type="binding site" evidence="5 20 21 22 23 24">
    <location>
        <position position="562"/>
    </location>
    <ligand>
        <name>Ca(2+)</name>
        <dbReference type="ChEBI" id="CHEBI:29108"/>
        <label>2</label>
    </ligand>
</feature>
<feature type="binding site" evidence="5 20 21 22 23 24">
    <location>
        <position position="653"/>
    </location>
    <ligand>
        <name>Ca(2+)</name>
        <dbReference type="ChEBI" id="CHEBI:29108"/>
        <label>2</label>
    </ligand>
</feature>
<feature type="binding site" evidence="5 20 21 22 23 24">
    <location>
        <position position="656"/>
    </location>
    <ligand>
        <name>Ca(2+)</name>
        <dbReference type="ChEBI" id="CHEBI:29108"/>
        <label>2</label>
    </ligand>
</feature>
<feature type="binding site" evidence="5 20 21 22 23 24">
    <location>
        <position position="658"/>
    </location>
    <ligand>
        <name>Ca(2+)</name>
        <dbReference type="ChEBI" id="CHEBI:29108"/>
        <label>2</label>
    </ligand>
</feature>
<feature type="binding site" evidence="5 20 21 22 23 24">
    <location>
        <position position="664"/>
    </location>
    <ligand>
        <name>Ca(2+)</name>
        <dbReference type="ChEBI" id="CHEBI:29108"/>
        <label>1</label>
    </ligand>
</feature>
<feature type="binding site" evidence="5 20 21 22 23 24">
    <location>
        <position position="665"/>
    </location>
    <ligand>
        <name>Ca(2+)</name>
        <dbReference type="ChEBI" id="CHEBI:29108"/>
        <label>1</label>
    </ligand>
</feature>
<feature type="binding site" evidence="5 20 21 22 23 24">
    <location>
        <position position="675"/>
    </location>
    <ligand>
        <name>Cu(2+)</name>
        <dbReference type="ChEBI" id="CHEBI:29036"/>
    </ligand>
</feature>
<feature type="modified residue" description="2',4',5'-topaquinone" evidence="5">
    <location>
        <position position="461"/>
    </location>
</feature>
<feature type="glycosylation site" description="N-linked (GlcNAc...) asparagine" evidence="5 20 21 22 23 24">
    <location>
        <position position="110"/>
    </location>
</feature>
<feature type="glycosylation site" description="N-linked (GlcNAc...) asparagine" evidence="2">
    <location>
        <position position="168"/>
    </location>
</feature>
<feature type="glycosylation site" description="N-linked (GlcNAc...) asparagine" evidence="5 20 21 22 23 24">
    <location>
        <position position="538"/>
    </location>
</feature>
<feature type="glycosylation site" description="N-linked (GlcNAc...) asparagine" evidence="5 20 21 22 23 24">
    <location>
        <position position="745"/>
    </location>
</feature>
<feature type="disulfide bond" evidence="5 20 21 22">
    <location>
        <begin position="177"/>
        <end position="181"/>
    </location>
</feature>
<feature type="disulfide bond" evidence="5 20 21 22">
    <location>
        <begin position="391"/>
        <end position="417"/>
    </location>
</feature>
<feature type="disulfide bond" description="Interchain" evidence="5 20 21 22">
    <location>
        <position position="736"/>
    </location>
</feature>
<feature type="splice variant" id="VSP_055190" description="In isoform 2." evidence="15">
    <original>A</original>
    <variation>ARTEGGQPRALSQAASPVPG</variation>
    <location>
        <position position="618"/>
    </location>
</feature>
<feature type="sequence variant" id="VAR_025078" description="In dbSNP:rs10156191." evidence="10">
    <original>T</original>
    <variation>M</variation>
    <location>
        <position position="16"/>
    </location>
</feature>
<feature type="sequence variant" id="VAR_025079" description="In dbSNP:rs1049742." evidence="9 10">
    <original>S</original>
    <variation>F</variation>
    <location>
        <position position="332"/>
    </location>
</feature>
<feature type="sequence variant" id="VAR_025080" description="In dbSNP:rs45558339." evidence="10">
    <original>M</original>
    <variation>I</variation>
    <location>
        <position position="479"/>
    </location>
</feature>
<feature type="sequence variant" id="VAR_007542" description="In dbSNP:rs1049793." evidence="4 6 9 10">
    <original>H</original>
    <variation>D</variation>
    <location>
        <position position="645"/>
    </location>
</feature>
<feature type="sequence variant" id="VAR_025081" description="In dbSNP:rs35070995." evidence="10">
    <original>N</original>
    <variation>H</variation>
    <location>
        <position position="659"/>
    </location>
</feature>
<feature type="sequence conflict" description="In Ref. 7; AA sequence." evidence="16" ref="7">
    <original>R</original>
    <variation>A</variation>
    <location>
        <position position="28"/>
    </location>
</feature>
<feature type="sequence conflict" description="In Ref. 1; AAA58358." evidence="16" ref="1">
    <original>P</original>
    <variation>A</variation>
    <location>
        <position position="280"/>
    </location>
</feature>
<feature type="sequence conflict" description="In Ref. 1; AAA58358." evidence="16" ref="1">
    <original>D</original>
    <variation>T</variation>
    <location>
        <position position="290"/>
    </location>
</feature>
<feature type="sequence conflict" description="In Ref. 1; AAA58358." evidence="16" ref="1">
    <original>K</original>
    <variation>R</variation>
    <location>
        <position position="572"/>
    </location>
</feature>
<feature type="sequence conflict" description="In Ref. 1; AAA58358, 2; CAA55046, 3; AAC50270/AAB60381 and 6; AAH14093." evidence="16" ref="1 2 3 6">
    <original>T</original>
    <variation>S</variation>
    <location>
        <position position="592"/>
    </location>
</feature>
<feature type="helix" evidence="25">
    <location>
        <begin position="29"/>
        <end position="33"/>
    </location>
</feature>
<feature type="helix" evidence="25">
    <location>
        <begin position="38"/>
        <end position="49"/>
    </location>
</feature>
<feature type="helix" evidence="25">
    <location>
        <begin position="52"/>
        <end position="54"/>
    </location>
</feature>
<feature type="strand" evidence="25">
    <location>
        <begin position="64"/>
        <end position="75"/>
    </location>
</feature>
<feature type="helix" evidence="25">
    <location>
        <begin position="79"/>
        <end position="88"/>
    </location>
</feature>
<feature type="strand" evidence="25">
    <location>
        <begin position="96"/>
        <end position="103"/>
    </location>
</feature>
<feature type="strand" evidence="25">
    <location>
        <begin position="105"/>
        <end position="108"/>
    </location>
</feature>
<feature type="strand" evidence="25">
    <location>
        <begin position="110"/>
        <end position="117"/>
    </location>
</feature>
<feature type="strand" evidence="25">
    <location>
        <begin position="119"/>
        <end position="121"/>
    </location>
</feature>
<feature type="strand" evidence="25">
    <location>
        <begin position="124"/>
        <end position="129"/>
    </location>
</feature>
<feature type="helix" evidence="25">
    <location>
        <begin position="137"/>
        <end position="140"/>
    </location>
</feature>
<feature type="helix" evidence="25">
    <location>
        <begin position="145"/>
        <end position="158"/>
    </location>
</feature>
<feature type="helix" evidence="25">
    <location>
        <begin position="160"/>
        <end position="162"/>
    </location>
</feature>
<feature type="helix" evidence="25">
    <location>
        <begin position="163"/>
        <end position="170"/>
    </location>
</feature>
<feature type="strand" evidence="25">
    <location>
        <begin position="173"/>
        <end position="176"/>
    </location>
</feature>
<feature type="strand" evidence="25">
    <location>
        <begin position="178"/>
        <end position="186"/>
    </location>
</feature>
<feature type="strand" evidence="25">
    <location>
        <begin position="191"/>
        <end position="193"/>
    </location>
</feature>
<feature type="strand" evidence="25">
    <location>
        <begin position="198"/>
        <end position="205"/>
    </location>
</feature>
<feature type="helix" evidence="25">
    <location>
        <begin position="210"/>
        <end position="212"/>
    </location>
</feature>
<feature type="strand" evidence="25">
    <location>
        <begin position="214"/>
        <end position="222"/>
    </location>
</feature>
<feature type="strand" evidence="25">
    <location>
        <begin position="225"/>
        <end position="227"/>
    </location>
</feature>
<feature type="helix" evidence="25">
    <location>
        <begin position="228"/>
        <end position="230"/>
    </location>
</feature>
<feature type="strand" evidence="25">
    <location>
        <begin position="232"/>
        <end position="238"/>
    </location>
</feature>
<feature type="helix" evidence="25">
    <location>
        <begin position="246"/>
        <end position="254"/>
    </location>
</feature>
<feature type="strand" evidence="25">
    <location>
        <begin position="301"/>
        <end position="303"/>
    </location>
</feature>
<feature type="strand" evidence="25">
    <location>
        <begin position="309"/>
        <end position="313"/>
    </location>
</feature>
<feature type="strand" evidence="25">
    <location>
        <begin position="316"/>
        <end position="320"/>
    </location>
</feature>
<feature type="strand" evidence="25">
    <location>
        <begin position="322"/>
        <end position="329"/>
    </location>
</feature>
<feature type="turn" evidence="25">
    <location>
        <begin position="330"/>
        <end position="332"/>
    </location>
</feature>
<feature type="strand" evidence="25">
    <location>
        <begin position="333"/>
        <end position="341"/>
    </location>
</feature>
<feature type="strand" evidence="25">
    <location>
        <begin position="344"/>
        <end position="359"/>
    </location>
</feature>
<feature type="helix" evidence="25">
    <location>
        <begin position="364"/>
        <end position="368"/>
    </location>
</feature>
<feature type="strand" evidence="25">
    <location>
        <begin position="370"/>
        <end position="372"/>
    </location>
</feature>
<feature type="helix" evidence="25">
    <location>
        <begin position="373"/>
        <end position="376"/>
    </location>
</feature>
<feature type="helix" evidence="25">
    <location>
        <begin position="378"/>
        <end position="380"/>
    </location>
</feature>
<feature type="turn" evidence="25">
    <location>
        <begin position="387"/>
        <end position="389"/>
    </location>
</feature>
<feature type="strand" evidence="25">
    <location>
        <begin position="395"/>
        <end position="405"/>
    </location>
</feature>
<feature type="strand" evidence="25">
    <location>
        <begin position="410"/>
        <end position="422"/>
    </location>
</feature>
<feature type="strand" evidence="25">
    <location>
        <begin position="427"/>
        <end position="433"/>
    </location>
</feature>
<feature type="strand" evidence="25">
    <location>
        <begin position="435"/>
        <end position="445"/>
    </location>
</feature>
<feature type="strand" evidence="25">
    <location>
        <begin position="448"/>
        <end position="456"/>
    </location>
</feature>
<feature type="strand" evidence="25">
    <location>
        <begin position="458"/>
        <end position="469"/>
    </location>
</feature>
<feature type="strand" evidence="25">
    <location>
        <begin position="475"/>
        <end position="483"/>
    </location>
</feature>
<feature type="strand" evidence="25">
    <location>
        <begin position="487"/>
        <end position="489"/>
    </location>
</feature>
<feature type="helix" evidence="25">
    <location>
        <begin position="492"/>
        <end position="496"/>
    </location>
</feature>
<feature type="strand" evidence="25">
    <location>
        <begin position="497"/>
        <end position="502"/>
    </location>
</feature>
<feature type="strand" evidence="25">
    <location>
        <begin position="505"/>
        <end position="508"/>
    </location>
</feature>
<feature type="strand" evidence="25">
    <location>
        <begin position="510"/>
        <end position="520"/>
    </location>
</feature>
<feature type="strand" evidence="25">
    <location>
        <begin position="524"/>
        <end position="540"/>
    </location>
</feature>
<feature type="strand" evidence="25">
    <location>
        <begin position="547"/>
        <end position="559"/>
    </location>
</feature>
<feature type="helix" evidence="25">
    <location>
        <begin position="562"/>
        <end position="565"/>
    </location>
</feature>
<feature type="strand" evidence="27">
    <location>
        <begin position="569"/>
        <end position="571"/>
    </location>
</feature>
<feature type="strand" evidence="25">
    <location>
        <begin position="575"/>
        <end position="584"/>
    </location>
</feature>
<feature type="strand" evidence="25">
    <location>
        <begin position="590"/>
        <end position="598"/>
    </location>
</feature>
<feature type="helix" evidence="25">
    <location>
        <begin position="610"/>
        <end position="619"/>
    </location>
</feature>
<feature type="strand" evidence="25">
    <location>
        <begin position="621"/>
        <end position="626"/>
    </location>
</feature>
<feature type="helix" evidence="25">
    <location>
        <begin position="629"/>
        <end position="631"/>
    </location>
</feature>
<feature type="turn" evidence="25">
    <location>
        <begin position="637"/>
        <end position="641"/>
    </location>
</feature>
<feature type="strand" evidence="25">
    <location>
        <begin position="643"/>
        <end position="645"/>
    </location>
</feature>
<feature type="helix" evidence="25">
    <location>
        <begin position="652"/>
        <end position="655"/>
    </location>
</feature>
<feature type="strand" evidence="25">
    <location>
        <begin position="661"/>
        <end position="675"/>
    </location>
</feature>
<feature type="helix" evidence="25">
    <location>
        <begin position="679"/>
        <end position="681"/>
    </location>
</feature>
<feature type="strand" evidence="25">
    <location>
        <begin position="691"/>
        <end position="704"/>
    </location>
</feature>
<feature type="helix" evidence="25">
    <location>
        <begin position="706"/>
        <end position="709"/>
    </location>
</feature>
<feature type="strand" evidence="25">
    <location>
        <begin position="714"/>
        <end position="717"/>
    </location>
</feature>
<feature type="strand" evidence="26">
    <location>
        <begin position="720"/>
        <end position="723"/>
    </location>
</feature>
<feature type="strand" evidence="25">
    <location>
        <begin position="725"/>
        <end position="727"/>
    </location>
</feature>
<feature type="sequence conflict" description="In Ref. 3; AAB60381." evidence="16" ref="3">
    <original>A</original>
    <variation>R</variation>
    <location sequence="P19801-2">
        <position position="632"/>
    </location>
</feature>
<gene>
    <name evidence="12 19" type="primary">AOC1</name>
    <name evidence="13 14" type="synonym">ABP</name>
    <name evidence="19" type="synonym">ABP1</name>
    <name evidence="14" type="synonym">DAO</name>
</gene>
<sequence>MPALGWAVAAILMLQTAMAEPSPGTLPRKAGVFSDLSNQELKAVHSFLWSKKELRLQPSSTTTMAKNTVFLIEMLLPKKYHVLRFLDKGERHPVREARAVIFFGDQEHPNVTEFAVGPLPGPCYMRALSPRPGYQSSWASRPISTAEYALLYHTLQEATKPLHQFFLNTTGFSFQDCHDRCLAFTDVAPRGVASGQRRSWLIIQRYVEGYFLHPTGLELLVDHGSTDAGHWAVEQVWYNGKFYGSPEELARKYADGEVDVVVLEDPLPGGKGHDSTEEPPLFSSHKPRGDFPSPIHVSGPRLVQPHGPRFRLEGNAVLYGGWSFAFRLRSSSGLQVLNVHFGGERIAYEVSVQEAVALYGGHTPAGMQTKYLDVGWGLGSVTHELAPGIDCPETATFLDTFHYYDADDPVHYPRALCLFEMPTGVPLRRHFNSNFKGGFNFYAGLKGQVLVLRTTSTVYNYDYIWDFIFYPNGVMEAKMHATGYVHATFYTPEGLRHGTRLHTHLIGNIHTHLVHYRVDLDVAGTKNSFQTLQMKLENITNPWSPRHRVVQPTLEQTQYSWERQAAFRFKRKLPKYLLFTSPQENPWGHKRTYRLQIHSMADQVLPPGWQEEQAITWARYPLAVTKYRESELCSSSIYHQNDPWHPPVVFEQFLHNNENIENEDLVAWVTVGFLHIPHSEDIPNTATPGNSVGFLLRPFNFFPEDPSLASRDTVIVWPRDNGPNYVQRWIPEDRDCSMPPPFSYNGTYRPV</sequence>
<name>AOC1_HUMAN</name>
<dbReference type="EC" id="1.4.3.22" evidence="3"/>
<dbReference type="EMBL" id="M55602">
    <property type="protein sequence ID" value="AAA58358.1"/>
    <property type="status" value="ALT_FRAME"/>
    <property type="molecule type" value="mRNA"/>
</dbReference>
<dbReference type="EMBL" id="X78212">
    <property type="protein sequence ID" value="CAA55046.1"/>
    <property type="molecule type" value="Genomic_DNA"/>
</dbReference>
<dbReference type="EMBL" id="U11862">
    <property type="protein sequence ID" value="AAC50270.1"/>
    <property type="molecule type" value="mRNA"/>
</dbReference>
<dbReference type="EMBL" id="U11863">
    <property type="protein sequence ID" value="AAB60381.1"/>
    <property type="molecule type" value="mRNA"/>
</dbReference>
<dbReference type="EMBL" id="AY948960">
    <property type="protein sequence ID" value="AAX81409.1"/>
    <property type="molecule type" value="Genomic_DNA"/>
</dbReference>
<dbReference type="EMBL" id="AC006343">
    <property type="status" value="NOT_ANNOTATED_CDS"/>
    <property type="molecule type" value="Genomic_DNA"/>
</dbReference>
<dbReference type="EMBL" id="AC006479">
    <property type="status" value="NOT_ANNOTATED_CDS"/>
    <property type="molecule type" value="Genomic_DNA"/>
</dbReference>
<dbReference type="EMBL" id="BC014093">
    <property type="protein sequence ID" value="AAH14093.1"/>
    <property type="molecule type" value="mRNA"/>
</dbReference>
<dbReference type="CCDS" id="CCDS43679.1">
    <molecule id="P19801-1"/>
</dbReference>
<dbReference type="CCDS" id="CCDS64797.1">
    <molecule id="P19801-2"/>
</dbReference>
<dbReference type="PIR" id="A54053">
    <property type="entry name" value="A54053"/>
</dbReference>
<dbReference type="RefSeq" id="NP_001082.2">
    <molecule id="P19801-1"/>
    <property type="nucleotide sequence ID" value="NM_001091.4"/>
</dbReference>
<dbReference type="RefSeq" id="NP_001259001.1">
    <molecule id="P19801-2"/>
    <property type="nucleotide sequence ID" value="NM_001272072.2"/>
</dbReference>
<dbReference type="RefSeq" id="XP_016867433.1">
    <property type="nucleotide sequence ID" value="XM_017011944.1"/>
</dbReference>
<dbReference type="RefSeq" id="XP_016867434.1">
    <molecule id="P19801-2"/>
    <property type="nucleotide sequence ID" value="XM_017011945.2"/>
</dbReference>
<dbReference type="RefSeq" id="XP_016867435.1">
    <molecule id="P19801-2"/>
    <property type="nucleotide sequence ID" value="XM_017011946.3"/>
</dbReference>
<dbReference type="RefSeq" id="XP_016867436.1">
    <molecule id="P19801-1"/>
    <property type="nucleotide sequence ID" value="XM_017011947.2"/>
</dbReference>
<dbReference type="RefSeq" id="XP_047276084.1">
    <molecule id="P19801-1"/>
    <property type="nucleotide sequence ID" value="XM_047420128.1"/>
</dbReference>
<dbReference type="PDB" id="3HI7">
    <property type="method" value="X-ray"/>
    <property type="resolution" value="1.80 A"/>
    <property type="chains" value="A/B=21-751"/>
</dbReference>
<dbReference type="PDB" id="3HIG">
    <property type="method" value="X-ray"/>
    <property type="resolution" value="2.09 A"/>
    <property type="chains" value="A/B=21-751"/>
</dbReference>
<dbReference type="PDB" id="3HII">
    <property type="method" value="X-ray"/>
    <property type="resolution" value="2.15 A"/>
    <property type="chains" value="A/B=21-751"/>
</dbReference>
<dbReference type="PDB" id="3K5T">
    <property type="method" value="X-ray"/>
    <property type="resolution" value="2.11 A"/>
    <property type="chains" value="A=21-751"/>
</dbReference>
<dbReference type="PDB" id="3MPH">
    <property type="method" value="X-ray"/>
    <property type="resolution" value="2.05 A"/>
    <property type="chains" value="A/B=21-751"/>
</dbReference>
<dbReference type="PDBsum" id="3HI7"/>
<dbReference type="PDBsum" id="3HIG"/>
<dbReference type="PDBsum" id="3HII"/>
<dbReference type="PDBsum" id="3K5T"/>
<dbReference type="PDBsum" id="3MPH"/>
<dbReference type="SMR" id="P19801"/>
<dbReference type="BioGRID" id="106544">
    <property type="interactions" value="16"/>
</dbReference>
<dbReference type="FunCoup" id="P19801">
    <property type="interactions" value="104"/>
</dbReference>
<dbReference type="IntAct" id="P19801">
    <property type="interactions" value="10"/>
</dbReference>
<dbReference type="STRING" id="9606.ENSP00000411613"/>
<dbReference type="BindingDB" id="P19801"/>
<dbReference type="ChEMBL" id="CHEMBL2118"/>
<dbReference type="DrugBank" id="DB00594">
    <property type="generic name" value="Amiloride"/>
</dbReference>
<dbReference type="DrugBank" id="DB01373">
    <property type="generic name" value="Calcium"/>
</dbReference>
<dbReference type="DrugBank" id="DB09130">
    <property type="generic name" value="Copper"/>
</dbReference>
<dbReference type="DrugBank" id="DB03608">
    <property type="generic name" value="Diminazene"/>
</dbReference>
<dbReference type="DrugBank" id="DB05383">
    <property type="generic name" value="Pimagedine"/>
</dbReference>
<dbReference type="DrugCentral" id="P19801"/>
<dbReference type="GlyCosmos" id="P19801">
    <property type="glycosylation" value="5 sites, 2 glycans"/>
</dbReference>
<dbReference type="GlyGen" id="P19801">
    <property type="glycosylation" value="9 sites, 72 N-linked glycans (3 sites), 4 O-linked glycans (2 sites)"/>
</dbReference>
<dbReference type="iPTMnet" id="P19801"/>
<dbReference type="PhosphoSitePlus" id="P19801"/>
<dbReference type="BioMuta" id="AOC1"/>
<dbReference type="DMDM" id="251757489"/>
<dbReference type="CPTAC" id="CPTAC-2204"/>
<dbReference type="jPOST" id="P19801"/>
<dbReference type="MassIVE" id="P19801"/>
<dbReference type="PaxDb" id="9606-ENSP00000411613"/>
<dbReference type="PeptideAtlas" id="P19801"/>
<dbReference type="ProteomicsDB" id="53688">
    <molecule id="P19801-1"/>
</dbReference>
<dbReference type="ProteomicsDB" id="53689">
    <molecule id="P19801-2"/>
</dbReference>
<dbReference type="ProteomicsDB" id="8732"/>
<dbReference type="TopDownProteomics" id="P19801-1">
    <molecule id="P19801-1"/>
</dbReference>
<dbReference type="Antibodypedia" id="10528">
    <property type="antibodies" value="407 antibodies from 28 providers"/>
</dbReference>
<dbReference type="DNASU" id="26"/>
<dbReference type="Ensembl" id="ENST00000360937.9">
    <molecule id="P19801-1"/>
    <property type="protein sequence ID" value="ENSP00000354193.4"/>
    <property type="gene ID" value="ENSG00000002726.21"/>
</dbReference>
<dbReference type="Ensembl" id="ENST00000416793.6">
    <molecule id="P19801-2"/>
    <property type="protein sequence ID" value="ENSP00000411613.2"/>
    <property type="gene ID" value="ENSG00000002726.21"/>
</dbReference>
<dbReference type="Ensembl" id="ENST00000467291.5">
    <molecule id="P19801-1"/>
    <property type="protein sequence ID" value="ENSP00000418328.1"/>
    <property type="gene ID" value="ENSG00000002726.21"/>
</dbReference>
<dbReference type="Ensembl" id="ENST00000493429.5">
    <molecule id="P19801-1"/>
    <property type="protein sequence ID" value="ENSP00000418614.1"/>
    <property type="gene ID" value="ENSG00000002726.21"/>
</dbReference>
<dbReference type="GeneID" id="26"/>
<dbReference type="KEGG" id="hsa:26"/>
<dbReference type="MANE-Select" id="ENST00000360937.9">
    <property type="protein sequence ID" value="ENSP00000354193.4"/>
    <property type="RefSeq nucleotide sequence ID" value="NM_001091.4"/>
    <property type="RefSeq protein sequence ID" value="NP_001082.2"/>
</dbReference>
<dbReference type="UCSC" id="uc003whz.3">
    <molecule id="P19801-1"/>
    <property type="organism name" value="human"/>
</dbReference>
<dbReference type="AGR" id="HGNC:80"/>
<dbReference type="CTD" id="26"/>
<dbReference type="DisGeNET" id="26"/>
<dbReference type="GeneCards" id="AOC1"/>
<dbReference type="HGNC" id="HGNC:80">
    <property type="gene designation" value="AOC1"/>
</dbReference>
<dbReference type="HPA" id="ENSG00000002726">
    <property type="expression patterns" value="Group enriched (intestine, kidney, placenta)"/>
</dbReference>
<dbReference type="MIM" id="104610">
    <property type="type" value="gene"/>
</dbReference>
<dbReference type="neXtProt" id="NX_P19801"/>
<dbReference type="OpenTargets" id="ENSG00000002726"/>
<dbReference type="PharmGKB" id="PA24416"/>
<dbReference type="VEuPathDB" id="HostDB:ENSG00000002726"/>
<dbReference type="eggNOG" id="KOG1186">
    <property type="taxonomic scope" value="Eukaryota"/>
</dbReference>
<dbReference type="GeneTree" id="ENSGT00950000183207"/>
<dbReference type="HOGENOM" id="CLU_015739_1_0_1"/>
<dbReference type="InParanoid" id="P19801"/>
<dbReference type="OMA" id="PYNSQDV"/>
<dbReference type="OrthoDB" id="5379943at2759"/>
<dbReference type="PAN-GO" id="P19801">
    <property type="GO annotations" value="6 GO annotations based on evolutionary models"/>
</dbReference>
<dbReference type="PhylomeDB" id="P19801"/>
<dbReference type="TreeFam" id="TF314750"/>
<dbReference type="BioCyc" id="MetaCyc:HS00083-MONOMER"/>
<dbReference type="BRENDA" id="1.4.3.22">
    <property type="organism ID" value="2681"/>
</dbReference>
<dbReference type="PathwayCommons" id="P19801"/>
<dbReference type="Reactome" id="R-HSA-211945">
    <property type="pathway name" value="Phase I - Functionalization of compounds"/>
</dbReference>
<dbReference type="Reactome" id="R-HSA-6798695">
    <property type="pathway name" value="Neutrophil degranulation"/>
</dbReference>
<dbReference type="SignaLink" id="P19801"/>
<dbReference type="BioGRID-ORCS" id="26">
    <property type="hits" value="8 hits in 1115 CRISPR screens"/>
</dbReference>
<dbReference type="ChiTaRS" id="AOC1">
    <property type="organism name" value="human"/>
</dbReference>
<dbReference type="EvolutionaryTrace" id="P19801"/>
<dbReference type="GenomeRNAi" id="26"/>
<dbReference type="Pharos" id="P19801">
    <property type="development level" value="Tchem"/>
</dbReference>
<dbReference type="PRO" id="PR:P19801"/>
<dbReference type="Proteomes" id="UP000005640">
    <property type="component" value="Chromosome 7"/>
</dbReference>
<dbReference type="RNAct" id="P19801">
    <property type="molecule type" value="protein"/>
</dbReference>
<dbReference type="Bgee" id="ENSG00000002726">
    <property type="expression patterns" value="Expressed in ileal mucosa and 104 other cell types or tissues"/>
</dbReference>
<dbReference type="ExpressionAtlas" id="P19801">
    <property type="expression patterns" value="baseline and differential"/>
</dbReference>
<dbReference type="GO" id="GO:0005923">
    <property type="term" value="C:bicellular tight junction"/>
    <property type="evidence" value="ECO:0000250"/>
    <property type="project" value="UniProtKB"/>
</dbReference>
<dbReference type="GO" id="GO:0070062">
    <property type="term" value="C:extracellular exosome"/>
    <property type="evidence" value="ECO:0000314"/>
    <property type="project" value="UniProtKB"/>
</dbReference>
<dbReference type="GO" id="GO:0005576">
    <property type="term" value="C:extracellular region"/>
    <property type="evidence" value="ECO:0000304"/>
    <property type="project" value="Reactome"/>
</dbReference>
<dbReference type="GO" id="GO:0005615">
    <property type="term" value="C:extracellular space"/>
    <property type="evidence" value="ECO:0000314"/>
    <property type="project" value="UniProtKB"/>
</dbReference>
<dbReference type="GO" id="GO:0005777">
    <property type="term" value="C:peroxisome"/>
    <property type="evidence" value="ECO:0000303"/>
    <property type="project" value="UniProtKB"/>
</dbReference>
<dbReference type="GO" id="GO:0005886">
    <property type="term" value="C:plasma membrane"/>
    <property type="evidence" value="ECO:0000314"/>
    <property type="project" value="UniProtKB"/>
</dbReference>
<dbReference type="GO" id="GO:0035580">
    <property type="term" value="C:specific granule lumen"/>
    <property type="evidence" value="ECO:0000304"/>
    <property type="project" value="Reactome"/>
</dbReference>
<dbReference type="GO" id="GO:0005509">
    <property type="term" value="F:calcium ion binding"/>
    <property type="evidence" value="ECO:0000314"/>
    <property type="project" value="UniProtKB"/>
</dbReference>
<dbReference type="GO" id="GO:0005507">
    <property type="term" value="F:copper ion binding"/>
    <property type="evidence" value="ECO:0000314"/>
    <property type="project" value="UniProtKB"/>
</dbReference>
<dbReference type="GO" id="GO:0052597">
    <property type="term" value="F:diamine oxidase activity"/>
    <property type="evidence" value="ECO:0000314"/>
    <property type="project" value="UniProtKB"/>
</dbReference>
<dbReference type="GO" id="GO:0008201">
    <property type="term" value="F:heparin binding"/>
    <property type="evidence" value="ECO:0000314"/>
    <property type="project" value="UniProtKB"/>
</dbReference>
<dbReference type="GO" id="GO:0052598">
    <property type="term" value="F:histamine oxidase activity"/>
    <property type="evidence" value="ECO:0000314"/>
    <property type="project" value="UniProtKB"/>
</dbReference>
<dbReference type="GO" id="GO:0008131">
    <property type="term" value="F:primary methylamine oxidase activity"/>
    <property type="evidence" value="ECO:0000314"/>
    <property type="project" value="MGI"/>
</dbReference>
<dbReference type="GO" id="GO:0042803">
    <property type="term" value="F:protein homodimerization activity"/>
    <property type="evidence" value="ECO:0000353"/>
    <property type="project" value="UniProtKB"/>
</dbReference>
<dbReference type="GO" id="GO:0050232">
    <property type="term" value="F:putrescine oxidase activity"/>
    <property type="evidence" value="ECO:0000314"/>
    <property type="project" value="UniProtKB"/>
</dbReference>
<dbReference type="GO" id="GO:0048038">
    <property type="term" value="F:quinone binding"/>
    <property type="evidence" value="ECO:0007669"/>
    <property type="project" value="InterPro"/>
</dbReference>
<dbReference type="GO" id="GO:0009445">
    <property type="term" value="P:putrescine metabolic process"/>
    <property type="evidence" value="ECO:0000315"/>
    <property type="project" value="UniProtKB"/>
</dbReference>
<dbReference type="FunFam" id="2.70.98.20:FF:000002">
    <property type="entry name" value="Amine oxidase"/>
    <property type="match status" value="1"/>
</dbReference>
<dbReference type="FunFam" id="3.10.450.40:FF:000007">
    <property type="entry name" value="Amine oxidase"/>
    <property type="match status" value="1"/>
</dbReference>
<dbReference type="FunFam" id="3.10.450.40:FF:000009">
    <property type="entry name" value="Amine oxidase"/>
    <property type="match status" value="1"/>
</dbReference>
<dbReference type="Gene3D" id="3.10.450.40">
    <property type="match status" value="2"/>
</dbReference>
<dbReference type="Gene3D" id="2.70.98.20">
    <property type="entry name" value="Copper amine oxidase, catalytic domain"/>
    <property type="match status" value="1"/>
</dbReference>
<dbReference type="InterPro" id="IPR049947">
    <property type="entry name" value="Cu_Am_Ox_Cu-bd"/>
</dbReference>
<dbReference type="InterPro" id="IPR049948">
    <property type="entry name" value="Cu_Am_ox_TPQ-bd"/>
</dbReference>
<dbReference type="InterPro" id="IPR000269">
    <property type="entry name" value="Cu_amine_oxidase"/>
</dbReference>
<dbReference type="InterPro" id="IPR015798">
    <property type="entry name" value="Cu_amine_oxidase_C"/>
</dbReference>
<dbReference type="InterPro" id="IPR036460">
    <property type="entry name" value="Cu_amine_oxidase_C_sf"/>
</dbReference>
<dbReference type="InterPro" id="IPR016182">
    <property type="entry name" value="Cu_amine_oxidase_N-reg"/>
</dbReference>
<dbReference type="InterPro" id="IPR015800">
    <property type="entry name" value="Cu_amine_oxidase_N2"/>
</dbReference>
<dbReference type="InterPro" id="IPR015802">
    <property type="entry name" value="Cu_amine_oxidase_N3"/>
</dbReference>
<dbReference type="PANTHER" id="PTHR10638:SF3">
    <property type="entry name" value="AMILORIDE-SENSITIVE AMINE OXIDASE [COPPER-CONTAINING]"/>
    <property type="match status" value="1"/>
</dbReference>
<dbReference type="PANTHER" id="PTHR10638">
    <property type="entry name" value="COPPER AMINE OXIDASE"/>
    <property type="match status" value="1"/>
</dbReference>
<dbReference type="Pfam" id="PF01179">
    <property type="entry name" value="Cu_amine_oxid"/>
    <property type="match status" value="1"/>
</dbReference>
<dbReference type="Pfam" id="PF02727">
    <property type="entry name" value="Cu_amine_oxidN2"/>
    <property type="match status" value="1"/>
</dbReference>
<dbReference type="Pfam" id="PF02728">
    <property type="entry name" value="Cu_amine_oxidN3"/>
    <property type="match status" value="1"/>
</dbReference>
<dbReference type="PRINTS" id="PR00766">
    <property type="entry name" value="CUDAOXIDASE"/>
</dbReference>
<dbReference type="SUPFAM" id="SSF49998">
    <property type="entry name" value="Amine oxidase catalytic domain"/>
    <property type="match status" value="1"/>
</dbReference>
<dbReference type="SUPFAM" id="SSF54416">
    <property type="entry name" value="Amine oxidase N-terminal region"/>
    <property type="match status" value="2"/>
</dbReference>
<dbReference type="PROSITE" id="PS01164">
    <property type="entry name" value="COPPER_AMINE_OXID_1"/>
    <property type="match status" value="1"/>
</dbReference>
<dbReference type="PROSITE" id="PS01165">
    <property type="entry name" value="COPPER_AMINE_OXID_2"/>
    <property type="match status" value="1"/>
</dbReference>
<reference key="1">
    <citation type="journal article" date="1990" name="Proc. Natl. Acad. Sci. U.S.A.">
        <title>Human kidney amiloride-binding protein: cDNA structure and functional expression.</title>
        <authorList>
            <person name="Barbry P."/>
            <person name="Champe M."/>
            <person name="Chassande O."/>
            <person name="Munemitsu S."/>
            <person name="Champigny G."/>
            <person name="Lingueglia E."/>
            <person name="Maes P."/>
            <person name="Frelin C."/>
            <person name="Tartar A."/>
            <person name="Ullrich A."/>
            <person name="Lazdunski M."/>
        </authorList>
    </citation>
    <scope>NUCLEOTIDE SEQUENCE [MRNA]</scope>
    <scope>PARTIAL PROTEIN SEQUENCE</scope>
    <scope>VARIANT ASP-645</scope>
    <source>
        <tissue>Kidney</tissue>
    </source>
</reference>
<reference key="2">
    <citation type="journal article" date="1994" name="J. Biol. Chem.">
        <title>The human gene for diamine oxidase, an amiloride binding protein. Molecular cloning, sequencing, and characterization of the promoter.</title>
        <authorList>
            <person name="Chassande O."/>
            <person name="Renard S."/>
            <person name="Barbry P."/>
            <person name="Lazdunski M."/>
        </authorList>
    </citation>
    <scope>NUCLEOTIDE SEQUENCE [GENOMIC DNA]</scope>
</reference>
<reference key="3">
    <citation type="journal article" date="1995" name="Biochem. Genet.">
        <title>cDNA sequences of variant forms of human placenta diamine oxidase.</title>
        <authorList>
            <person name="Zhang X."/>
            <person name="Kim J."/>
            <person name="McIntire W.S."/>
        </authorList>
    </citation>
    <scope>NUCLEOTIDE SEQUENCE [MRNA] (ISOFORMS 1 AND 2)</scope>
    <scope>VARIANTS PHE-332 AND ASP-645</scope>
    <source>
        <tissue>Placenta</tissue>
    </source>
</reference>
<reference key="4">
    <citation type="submission" date="2005-03" db="EMBL/GenBank/DDBJ databases">
        <authorList>
            <consortium name="NIEHS SNPs program"/>
        </authorList>
    </citation>
    <scope>NUCLEOTIDE SEQUENCE [GENOMIC DNA]</scope>
    <scope>VARIANTS MET-16; PHE-332; ILE-479; ASP-645 AND HIS-659</scope>
</reference>
<reference key="5">
    <citation type="journal article" date="2003" name="Nature">
        <title>The DNA sequence of human chromosome 7.</title>
        <authorList>
            <person name="Hillier L.W."/>
            <person name="Fulton R.S."/>
            <person name="Fulton L.A."/>
            <person name="Graves T.A."/>
            <person name="Pepin K.H."/>
            <person name="Wagner-McPherson C."/>
            <person name="Layman D."/>
            <person name="Maas J."/>
            <person name="Jaeger S."/>
            <person name="Walker R."/>
            <person name="Wylie K."/>
            <person name="Sekhon M."/>
            <person name="Becker M.C."/>
            <person name="O'Laughlin M.D."/>
            <person name="Schaller M.E."/>
            <person name="Fewell G.A."/>
            <person name="Delehaunty K.D."/>
            <person name="Miner T.L."/>
            <person name="Nash W.E."/>
            <person name="Cordes M."/>
            <person name="Du H."/>
            <person name="Sun H."/>
            <person name="Edwards J."/>
            <person name="Bradshaw-Cordum H."/>
            <person name="Ali J."/>
            <person name="Andrews S."/>
            <person name="Isak A."/>
            <person name="Vanbrunt A."/>
            <person name="Nguyen C."/>
            <person name="Du F."/>
            <person name="Lamar B."/>
            <person name="Courtney L."/>
            <person name="Kalicki J."/>
            <person name="Ozersky P."/>
            <person name="Bielicki L."/>
            <person name="Scott K."/>
            <person name="Holmes A."/>
            <person name="Harkins R."/>
            <person name="Harris A."/>
            <person name="Strong C.M."/>
            <person name="Hou S."/>
            <person name="Tomlinson C."/>
            <person name="Dauphin-Kohlberg S."/>
            <person name="Kozlowicz-Reilly A."/>
            <person name="Leonard S."/>
            <person name="Rohlfing T."/>
            <person name="Rock S.M."/>
            <person name="Tin-Wollam A.-M."/>
            <person name="Abbott A."/>
            <person name="Minx P."/>
            <person name="Maupin R."/>
            <person name="Strowmatt C."/>
            <person name="Latreille P."/>
            <person name="Miller N."/>
            <person name="Johnson D."/>
            <person name="Murray J."/>
            <person name="Woessner J.P."/>
            <person name="Wendl M.C."/>
            <person name="Yang S.-P."/>
            <person name="Schultz B.R."/>
            <person name="Wallis J.W."/>
            <person name="Spieth J."/>
            <person name="Bieri T.A."/>
            <person name="Nelson J.O."/>
            <person name="Berkowicz N."/>
            <person name="Wohldmann P.E."/>
            <person name="Cook L.L."/>
            <person name="Hickenbotham M.T."/>
            <person name="Eldred J."/>
            <person name="Williams D."/>
            <person name="Bedell J.A."/>
            <person name="Mardis E.R."/>
            <person name="Clifton S.W."/>
            <person name="Chissoe S.L."/>
            <person name="Marra M.A."/>
            <person name="Raymond C."/>
            <person name="Haugen E."/>
            <person name="Gillett W."/>
            <person name="Zhou Y."/>
            <person name="James R."/>
            <person name="Phelps K."/>
            <person name="Iadanoto S."/>
            <person name="Bubb K."/>
            <person name="Simms E."/>
            <person name="Levy R."/>
            <person name="Clendenning J."/>
            <person name="Kaul R."/>
            <person name="Kent W.J."/>
            <person name="Furey T.S."/>
            <person name="Baertsch R.A."/>
            <person name="Brent M.R."/>
            <person name="Keibler E."/>
            <person name="Flicek P."/>
            <person name="Bork P."/>
            <person name="Suyama M."/>
            <person name="Bailey J.A."/>
            <person name="Portnoy M.E."/>
            <person name="Torrents D."/>
            <person name="Chinwalla A.T."/>
            <person name="Gish W.R."/>
            <person name="Eddy S.R."/>
            <person name="McPherson J.D."/>
            <person name="Olson M.V."/>
            <person name="Eichler E.E."/>
            <person name="Green E.D."/>
            <person name="Waterston R.H."/>
            <person name="Wilson R.K."/>
        </authorList>
    </citation>
    <scope>NUCLEOTIDE SEQUENCE [LARGE SCALE GENOMIC DNA]</scope>
</reference>
<reference key="6">
    <citation type="journal article" date="2004" name="Genome Res.">
        <title>The status, quality, and expansion of the NIH full-length cDNA project: the Mammalian Gene Collection (MGC).</title>
        <authorList>
            <consortium name="The MGC Project Team"/>
        </authorList>
    </citation>
    <scope>NUCLEOTIDE SEQUENCE [LARGE SCALE MRNA] (ISOFORM 1)</scope>
    <scope>VARIANT ASP-645</scope>
    <source>
        <tissue>Colon</tissue>
    </source>
</reference>
<reference key="7">
    <citation type="journal article" date="1994" name="J. Biol. Chem.">
        <title>Diamine oxidase is the amiloride-binding protein and is inhibited by amiloride analogues.</title>
        <authorList>
            <person name="Novotny W.F."/>
            <person name="Chassande O."/>
            <person name="Baker M."/>
            <person name="Lazdunski M."/>
            <person name="Barbry P."/>
        </authorList>
    </citation>
    <scope>PROTEIN SEQUENCE OF 20-39</scope>
    <scope>FUNCTION</scope>
    <scope>CATALYTIC ACTIVITY</scope>
    <scope>BIOPHYSICOCHEMICAL PROPERTIES</scope>
    <scope>ACTIVITY REGULATION</scope>
    <scope>SUBCELLULAR LOCATION</scope>
    <source>
        <tissue>Placenta</tissue>
    </source>
</reference>
<reference key="8">
    <citation type="journal article" date="1975" name="Biochem. J.">
        <title>Oxidation of polymines by diamine oxidase from human seminal plasma.</title>
        <authorList>
            <person name="Hoelttae E."/>
            <person name="Pulkkinen P."/>
            <person name="Elfving K."/>
            <person name="Jaenne J."/>
        </authorList>
    </citation>
    <scope>FUNCTION</scope>
</reference>
<reference key="9">
    <citation type="journal article" date="2002" name="J. Biol. Inorg. Chem.">
        <title>Human kidney diamine oxidase: heterologous expression, purification, and characterization.</title>
        <authorList>
            <person name="Elmore B.O."/>
            <person name="Bollinger J.A."/>
            <person name="Dooley D.M."/>
        </authorList>
    </citation>
    <scope>FUNCTION</scope>
    <scope>CATALYTIC ACTIVITY</scope>
    <scope>SUBSTRATE SPECIFICITY</scope>
    <scope>COFACTOR</scope>
    <scope>BIOPHYSICOCHEMICAL PROPERTIES</scope>
    <scope>SUBUNIT</scope>
    <scope>GLYCOSYLATION</scope>
    <scope>TISSUE SPECIFICITY</scope>
</reference>
<reference evidence="20 21 22" key="10">
    <citation type="journal article" date="2009" name="Biochemistry">
        <title>Structure and inhibition of human diamine oxidase.</title>
        <authorList>
            <person name="McGrath A.P."/>
            <person name="Hilmer K.M."/>
            <person name="Collyer C.A."/>
            <person name="Shepard E.M."/>
            <person name="Elmore B.O."/>
            <person name="Brown D.E."/>
            <person name="Dooley D.M."/>
            <person name="Guss J.M."/>
        </authorList>
    </citation>
    <scope>X-RAY CRYSTALLOGRAPHY (1.8 ANGSTROMS) OF 22-751 IN COMPLEX WITH CALCIUM; COPPER AND INHIBITORS</scope>
    <scope>FUNCTION</scope>
    <scope>GLYCOSYLATION AT ASN-110; ASN-538 AND ASN-745</scope>
    <scope>ACTIVE SITE</scope>
    <scope>CALCIUM-BINDING SITES</scope>
    <scope>COPPER-BINDING SITES</scope>
    <scope>DISULFIDE BONDS</scope>
    <scope>TOPAQUINONE AT TYR-461</scope>
    <scope>SUBUNIT</scope>
    <scope>ACTIVITY REGULATION</scope>
    <scope>CATALYTIC ACTIVITY</scope>
</reference>
<comment type="function">
    <text evidence="3 5 7 8">Catalyzes the oxidative deamination of primary amines to the corresponding aldehydes with the concomitant production of hydrogen peroxide and ammonia (PubMed:12072962, PubMed:19764817, PubMed:239684, PubMed:8144586). Its preferred substrates are the diamines histamine and 1-methylhistamine and it could therefore play a role in allergic and immune responses (PubMed:12072962). Has a broad specificity for diamines and can also act on cadaverine and putrescine, two products of amino acid catabolism (PubMed:12072962). It could also act on polyamines, like spermidine and spermine though less efficiently, and regulate various biological processes (PubMed:12072962, PubMed:239684).</text>
</comment>
<comment type="catalytic activity">
    <reaction evidence="3">
        <text>histamine + O2 + H2O = imidazole-4-acetaldehyde + H2O2 + NH4(+)</text>
        <dbReference type="Rhea" id="RHEA:25625"/>
        <dbReference type="ChEBI" id="CHEBI:15377"/>
        <dbReference type="ChEBI" id="CHEBI:15379"/>
        <dbReference type="ChEBI" id="CHEBI:16240"/>
        <dbReference type="ChEBI" id="CHEBI:27398"/>
        <dbReference type="ChEBI" id="CHEBI:28938"/>
        <dbReference type="ChEBI" id="CHEBI:58432"/>
        <dbReference type="EC" id="1.4.3.22"/>
    </reaction>
    <physiologicalReaction direction="left-to-right" evidence="17">
        <dbReference type="Rhea" id="RHEA:25626"/>
    </physiologicalReaction>
</comment>
<comment type="catalytic activity">
    <reaction evidence="3">
        <text>N(tau)-methylhistamine + O2 + H2O = 1-methylimidazole-4-acetaldehyde + H2O2 + NH4(+)</text>
        <dbReference type="Rhea" id="RHEA:78367"/>
        <dbReference type="ChEBI" id="CHEBI:15377"/>
        <dbReference type="ChEBI" id="CHEBI:15379"/>
        <dbReference type="ChEBI" id="CHEBI:16240"/>
        <dbReference type="ChEBI" id="CHEBI:28104"/>
        <dbReference type="ChEBI" id="CHEBI:28938"/>
        <dbReference type="ChEBI" id="CHEBI:58600"/>
    </reaction>
    <physiologicalReaction direction="left-to-right" evidence="17">
        <dbReference type="Rhea" id="RHEA:78368"/>
    </physiologicalReaction>
</comment>
<comment type="catalytic activity">
    <reaction evidence="3 5 8">
        <text>putrescine + O2 + H2O = 4-aminobutanal + H2O2 + NH4(+)</text>
        <dbReference type="Rhea" id="RHEA:18273"/>
        <dbReference type="ChEBI" id="CHEBI:15377"/>
        <dbReference type="ChEBI" id="CHEBI:15379"/>
        <dbReference type="ChEBI" id="CHEBI:16240"/>
        <dbReference type="ChEBI" id="CHEBI:28938"/>
        <dbReference type="ChEBI" id="CHEBI:58264"/>
        <dbReference type="ChEBI" id="CHEBI:326268"/>
    </reaction>
    <physiologicalReaction direction="left-to-right" evidence="18">
        <dbReference type="Rhea" id="RHEA:18274"/>
    </physiologicalReaction>
</comment>
<comment type="catalytic activity">
    <reaction evidence="3">
        <text>cadaverine + O2 + H2O = 5-aminopentanal + H2O2 + NH4(+)</text>
        <dbReference type="Rhea" id="RHEA:69132"/>
        <dbReference type="ChEBI" id="CHEBI:15377"/>
        <dbReference type="ChEBI" id="CHEBI:15379"/>
        <dbReference type="ChEBI" id="CHEBI:16240"/>
        <dbReference type="ChEBI" id="CHEBI:28938"/>
        <dbReference type="ChEBI" id="CHEBI:58384"/>
        <dbReference type="ChEBI" id="CHEBI:144896"/>
    </reaction>
    <physiologicalReaction direction="left-to-right" evidence="17">
        <dbReference type="Rhea" id="RHEA:69133"/>
    </physiologicalReaction>
</comment>
<comment type="cofactor">
    <cofactor evidence="3 5">
        <name>Cu(2+)</name>
        <dbReference type="ChEBI" id="CHEBI:29036"/>
    </cofactor>
    <text evidence="5">Binds 1 copper ion per subunit.</text>
</comment>
<comment type="cofactor">
    <cofactor evidence="3 5">
        <name>Ca(2+)</name>
        <dbReference type="ChEBI" id="CHEBI:29108"/>
    </cofactor>
    <text evidence="5">Binds 2 calcium ions per subunit.</text>
</comment>
<comment type="cofactor">
    <cofactor evidence="3 5">
        <name>L-topaquinone</name>
        <dbReference type="ChEBI" id="CHEBI:79027"/>
    </cofactor>
    <text evidence="5">Contains 1 topaquinone per subunit.</text>
</comment>
<comment type="activity regulation">
    <text evidence="5 8">Inhibited by amiloride and amiloride analogs (PubMed:8144586). Inhibited by isoniazid, cimetidine, clonidine, berenil and pentamidine (PubMed:19764817).</text>
</comment>
<comment type="biophysicochemical properties">
    <kinetics>
        <KM evidence="8">8 uM for putrescine (at pH 7.5 and 37 degrees Celsius)</KM>
        <KM evidence="3">2.8 uM for histamine (at pH 7.5 and 37 degrees Celsius)</KM>
        <KM evidence="3">3.4 uM for 1-methylhistamine (at pH 7.5 and 37 degrees Celsius)</KM>
        <KM evidence="3">30 uM for cadaverine (at pH 7.5 and 37 degrees Celsius)</KM>
        <KM evidence="3">1100 uM for spermidine (at pH 7.5 and 37 degrees Celsius)</KM>
        <text evidence="3">kcat is 139 min(-1) with histamine as substrate (at pH 7.5 and 37 degrees Celsius) (PubMed:12072962). kcat is 103 min(-1) with 1-methylhistamine as substrate (at pH 7.5 and 37 degrees Celsius) (PubMed:12072962). kcat is 475 min(-1) with putrescine as substrate (at pH 7.5 and 37 degrees Celsius) (PubMed:12072962). kcat is 453 min(-1) with cadaverine as substrate (at pH 7.5 and 37 degrees Celsius) (PubMed:12072962). kcat is 187 min(-1) with spermidine as substrate (at pH 7.5 and 37 degrees Celsius) (PubMed:12072962).</text>
    </kinetics>
    <phDependence>
        <text evidence="3">Optimum pH is 7.2.</text>
    </phDependence>
</comment>
<comment type="subunit">
    <text evidence="3 5">Homodimer; disulfide-linked.</text>
</comment>
<comment type="interaction">
    <interactant intactId="EBI-12826295">
        <id>P19801</id>
    </interactant>
    <interactant intactId="EBI-724310">
        <id>Q15038</id>
        <label>DAZAP2</label>
    </interactant>
    <organismsDiffer>false</organismsDiffer>
    <experiments>3</experiments>
</comment>
<comment type="interaction">
    <interactant intactId="EBI-12826295">
        <id>P19801</id>
    </interactant>
    <interactant intactId="EBI-1759806">
        <id>O75593</id>
        <label>FOXH1</label>
    </interactant>
    <organismsDiffer>false</organismsDiffer>
    <experiments>3</experiments>
</comment>
<comment type="interaction">
    <interactant intactId="EBI-12826295">
        <id>P19801</id>
    </interactant>
    <interactant intactId="EBI-10261141">
        <id>Q8IUC2</id>
        <label>KRTAP8-1</label>
    </interactant>
    <organismsDiffer>false</organismsDiffer>
    <experiments>3</experiments>
</comment>
<comment type="interaction">
    <interactant intactId="EBI-12826295">
        <id>P19801</id>
    </interactant>
    <interactant intactId="EBI-741158">
        <id>Q96HA8</id>
        <label>NTAQ1</label>
    </interactant>
    <organismsDiffer>false</organismsDiffer>
    <experiments>3</experiments>
</comment>
<comment type="interaction">
    <interactant intactId="EBI-12826295">
        <id>P19801</id>
    </interactant>
    <interactant intactId="EBI-1389308">
        <id>Q7Z3K3</id>
        <label>POGZ</label>
    </interactant>
    <organismsDiffer>false</organismsDiffer>
    <experiments>3</experiments>
</comment>
<comment type="interaction">
    <interactant intactId="EBI-12826295">
        <id>P19801</id>
    </interactant>
    <interactant intactId="EBI-11987469">
        <id>Q6ZRY4</id>
        <label>RBPMS2</label>
    </interactant>
    <organismsDiffer>false</organismsDiffer>
    <experiments>3</experiments>
</comment>
<comment type="interaction">
    <interactant intactId="EBI-12826295">
        <id>P19801</id>
    </interactant>
    <interactant intactId="EBI-11064654">
        <id>Q01085-2</id>
        <label>TIAL1</label>
    </interactant>
    <organismsDiffer>false</organismsDiffer>
    <experiments>3</experiments>
</comment>
<comment type="interaction">
    <interactant intactId="EBI-12826295">
        <id>P19801</id>
    </interactant>
    <interactant intactId="EBI-3939165">
        <id>O43711</id>
        <label>TLX3</label>
    </interactant>
    <organismsDiffer>false</organismsDiffer>
    <experiments>3</experiments>
</comment>
<comment type="interaction">
    <interactant intactId="EBI-12826295">
        <id>P19801</id>
    </interactant>
    <interactant intactId="EBI-742550">
        <id>Q96K80</id>
        <label>ZC3H10</label>
    </interactant>
    <organismsDiffer>false</organismsDiffer>
    <experiments>3</experiments>
</comment>
<comment type="subcellular location">
    <subcellularLocation>
        <location evidence="8">Secreted</location>
        <location evidence="8">Extracellular space</location>
    </subcellularLocation>
    <subcellularLocation>
        <location evidence="8">Cell membrane</location>
        <topology evidence="18">Peripheral membrane protein</topology>
        <orientation evidence="18">Extracellular side</orientation>
    </subcellularLocation>
</comment>
<comment type="alternative products">
    <event type="alternative splicing"/>
    <isoform>
        <id>P19801-1</id>
        <name>1</name>
        <name evidence="15">DAO1</name>
        <sequence type="displayed"/>
    </isoform>
    <isoform>
        <id>P19801-2</id>
        <name>2</name>
        <name evidence="15">DAO2</name>
        <sequence type="described" ref="VSP_055190"/>
    </isoform>
</comment>
<comment type="tissue specificity">
    <text evidence="3">Widely expressed with higher expression in placenta and kidney.</text>
</comment>
<comment type="PTM">
    <text evidence="3 5">N-glycosylated.</text>
</comment>
<comment type="PTM">
    <text evidence="1">Topaquinone (TPQ) is generated by copper-dependent autoxidation of a specific tyrosyl residue.</text>
</comment>
<comment type="miscellaneous">
    <text evidence="6 8">Originally identified as an amiloride-binding protein (ABP) that could be related to amiloride-sensitive sodium channels, but later shown to function as a diamine oxidase (DAO).</text>
</comment>
<comment type="similarity">
    <text evidence="16">Belongs to the copper/topaquinone oxidase family.</text>
</comment>
<comment type="sequence caution" evidence="16">
    <conflict type="frameshift">
        <sequence resource="EMBL-CDS" id="AAA58358"/>
    </conflict>
</comment>
<evidence type="ECO:0000250" key="1">
    <source>
        <dbReference type="UniProtKB" id="P12807"/>
    </source>
</evidence>
<evidence type="ECO:0000255" key="2">
    <source>
        <dbReference type="PROSITE-ProRule" id="PRU00498"/>
    </source>
</evidence>
<evidence type="ECO:0000269" key="3">
    <source>
    </source>
</evidence>
<evidence type="ECO:0000269" key="4">
    <source>
    </source>
</evidence>
<evidence type="ECO:0000269" key="5">
    <source>
    </source>
</evidence>
<evidence type="ECO:0000269" key="6">
    <source>
    </source>
</evidence>
<evidence type="ECO:0000269" key="7">
    <source>
    </source>
</evidence>
<evidence type="ECO:0000269" key="8">
    <source>
    </source>
</evidence>
<evidence type="ECO:0000269" key="9">
    <source>
    </source>
</evidence>
<evidence type="ECO:0000269" key="10">
    <source ref="4"/>
</evidence>
<evidence type="ECO:0000303" key="11">
    <source>
    </source>
</evidence>
<evidence type="ECO:0000303" key="12">
    <source>
    </source>
</evidence>
<evidence type="ECO:0000303" key="13">
    <source>
    </source>
</evidence>
<evidence type="ECO:0000303" key="14">
    <source>
    </source>
</evidence>
<evidence type="ECO:0000303" key="15">
    <source>
    </source>
</evidence>
<evidence type="ECO:0000305" key="16"/>
<evidence type="ECO:0000305" key="17">
    <source>
    </source>
</evidence>
<evidence type="ECO:0000305" key="18">
    <source>
    </source>
</evidence>
<evidence type="ECO:0000312" key="19">
    <source>
        <dbReference type="HGNC" id="HGNC:80"/>
    </source>
</evidence>
<evidence type="ECO:0007744" key="20">
    <source>
        <dbReference type="PDB" id="3HI7"/>
    </source>
</evidence>
<evidence type="ECO:0007744" key="21">
    <source>
        <dbReference type="PDB" id="3HIG"/>
    </source>
</evidence>
<evidence type="ECO:0007744" key="22">
    <source>
        <dbReference type="PDB" id="3HII"/>
    </source>
</evidence>
<evidence type="ECO:0007744" key="23">
    <source>
        <dbReference type="PDB" id="3K5T"/>
    </source>
</evidence>
<evidence type="ECO:0007744" key="24">
    <source>
        <dbReference type="PDB" id="3MPH"/>
    </source>
</evidence>
<evidence type="ECO:0007829" key="25">
    <source>
        <dbReference type="PDB" id="3HI7"/>
    </source>
</evidence>
<evidence type="ECO:0007829" key="26">
    <source>
        <dbReference type="PDB" id="3K5T"/>
    </source>
</evidence>
<evidence type="ECO:0007829" key="27">
    <source>
        <dbReference type="PDB" id="3MPH"/>
    </source>
</evidence>
<keyword id="KW-0002">3D-structure</keyword>
<keyword id="KW-0025">Alternative splicing</keyword>
<keyword id="KW-0106">Calcium</keyword>
<keyword id="KW-1003">Cell membrane</keyword>
<keyword id="KW-0186">Copper</keyword>
<keyword id="KW-0903">Direct protein sequencing</keyword>
<keyword id="KW-1015">Disulfide bond</keyword>
<keyword id="KW-0325">Glycoprotein</keyword>
<keyword id="KW-0358">Heparin-binding</keyword>
<keyword id="KW-0472">Membrane</keyword>
<keyword id="KW-0479">Metal-binding</keyword>
<keyword id="KW-0560">Oxidoreductase</keyword>
<keyword id="KW-1267">Proteomics identification</keyword>
<keyword id="KW-1185">Reference proteome</keyword>
<keyword id="KW-0964">Secreted</keyword>
<keyword id="KW-0732">Signal</keyword>
<keyword id="KW-0801">TPQ</keyword>
<proteinExistence type="evidence at protein level"/>
<protein>
    <recommendedName>
        <fullName evidence="17">Diamine oxidase [copper-containing]</fullName>
        <shortName evidence="14">Diamine oxidase</shortName>
        <ecNumber evidence="3">1.4.3.22</ecNumber>
    </recommendedName>
    <alternativeName>
        <fullName evidence="13 14">Amiloride-binding protein</fullName>
    </alternativeName>
    <alternativeName>
        <fullName evidence="19">Amiloride-binding protein 1</fullName>
    </alternativeName>
    <alternativeName>
        <fullName evidence="19">Amine oxidase copper domain-containing protein 1</fullName>
    </alternativeName>
    <alternativeName>
        <fullName evidence="14">Histaminase</fullName>
    </alternativeName>
    <alternativeName>
        <fullName evidence="13">Kidney amine oxidase</fullName>
        <shortName evidence="13">KAO</shortName>
        <shortName evidence="11">KDAO</shortName>
    </alternativeName>
</protein>
<organism>
    <name type="scientific">Homo sapiens</name>
    <name type="common">Human</name>
    <dbReference type="NCBI Taxonomy" id="9606"/>
    <lineage>
        <taxon>Eukaryota</taxon>
        <taxon>Metazoa</taxon>
        <taxon>Chordata</taxon>
        <taxon>Craniata</taxon>
        <taxon>Vertebrata</taxon>
        <taxon>Euteleostomi</taxon>
        <taxon>Mammalia</taxon>
        <taxon>Eutheria</taxon>
        <taxon>Euarchontoglires</taxon>
        <taxon>Primates</taxon>
        <taxon>Haplorrhini</taxon>
        <taxon>Catarrhini</taxon>
        <taxon>Hominidae</taxon>
        <taxon>Homo</taxon>
    </lineage>
</organism>
<accession>P19801</accession>
<accession>C9J690</accession>
<accession>Q16683</accession>
<accession>Q16684</accession>
<accession>Q56II4</accession>
<accession>Q6GU42</accession>